<dbReference type="EMBL" id="CP000086">
    <property type="protein sequence ID" value="ABC38188.1"/>
    <property type="molecule type" value="Genomic_DNA"/>
</dbReference>
<dbReference type="RefSeq" id="WP_009890168.1">
    <property type="nucleotide sequence ID" value="NZ_CP008785.1"/>
</dbReference>
<dbReference type="SMR" id="Q2SXE0"/>
<dbReference type="GeneID" id="45121611"/>
<dbReference type="KEGG" id="bte:BTH_I1879"/>
<dbReference type="HOGENOM" id="CLU_005965_2_1_4"/>
<dbReference type="Proteomes" id="UP000001930">
    <property type="component" value="Chromosome I"/>
</dbReference>
<dbReference type="GO" id="GO:0005524">
    <property type="term" value="F:ATP binding"/>
    <property type="evidence" value="ECO:0007669"/>
    <property type="project" value="UniProtKB-KW"/>
</dbReference>
<dbReference type="GO" id="GO:0016887">
    <property type="term" value="F:ATP hydrolysis activity"/>
    <property type="evidence" value="ECO:0007669"/>
    <property type="project" value="UniProtKB-UniRule"/>
</dbReference>
<dbReference type="GO" id="GO:0140662">
    <property type="term" value="F:ATP-dependent protein folding chaperone"/>
    <property type="evidence" value="ECO:0007669"/>
    <property type="project" value="InterPro"/>
</dbReference>
<dbReference type="GO" id="GO:0051082">
    <property type="term" value="F:unfolded protein binding"/>
    <property type="evidence" value="ECO:0007669"/>
    <property type="project" value="InterPro"/>
</dbReference>
<dbReference type="GO" id="GO:0016226">
    <property type="term" value="P:iron-sulfur cluster assembly"/>
    <property type="evidence" value="ECO:0007669"/>
    <property type="project" value="InterPro"/>
</dbReference>
<dbReference type="FunFam" id="3.30.420.40:FF:000046">
    <property type="entry name" value="Chaperone protein HscA"/>
    <property type="match status" value="1"/>
</dbReference>
<dbReference type="FunFam" id="2.60.34.10:FF:000005">
    <property type="entry name" value="Chaperone protein HscA homolog"/>
    <property type="match status" value="1"/>
</dbReference>
<dbReference type="Gene3D" id="1.20.1270.10">
    <property type="match status" value="1"/>
</dbReference>
<dbReference type="Gene3D" id="3.30.420.40">
    <property type="match status" value="2"/>
</dbReference>
<dbReference type="Gene3D" id="3.90.640.10">
    <property type="entry name" value="Actin, Chain A, domain 4"/>
    <property type="match status" value="1"/>
</dbReference>
<dbReference type="Gene3D" id="2.60.34.10">
    <property type="entry name" value="Substrate Binding Domain Of DNAk, Chain A, domain 1"/>
    <property type="match status" value="1"/>
</dbReference>
<dbReference type="HAMAP" id="MF_00679">
    <property type="entry name" value="HscA"/>
    <property type="match status" value="1"/>
</dbReference>
<dbReference type="InterPro" id="IPR043129">
    <property type="entry name" value="ATPase_NBD"/>
</dbReference>
<dbReference type="InterPro" id="IPR018181">
    <property type="entry name" value="Heat_shock_70_CS"/>
</dbReference>
<dbReference type="InterPro" id="IPR029048">
    <property type="entry name" value="HSP70_C_sf"/>
</dbReference>
<dbReference type="InterPro" id="IPR029047">
    <property type="entry name" value="HSP70_peptide-bd_sf"/>
</dbReference>
<dbReference type="InterPro" id="IPR013126">
    <property type="entry name" value="Hsp_70_fam"/>
</dbReference>
<dbReference type="InterPro" id="IPR010236">
    <property type="entry name" value="ISC_FeS_clus_asmbl_HscA"/>
</dbReference>
<dbReference type="NCBIfam" id="TIGR01991">
    <property type="entry name" value="HscA"/>
    <property type="match status" value="1"/>
</dbReference>
<dbReference type="NCBIfam" id="NF003520">
    <property type="entry name" value="PRK05183.1"/>
    <property type="match status" value="1"/>
</dbReference>
<dbReference type="PANTHER" id="PTHR19375">
    <property type="entry name" value="HEAT SHOCK PROTEIN 70KDA"/>
    <property type="match status" value="1"/>
</dbReference>
<dbReference type="Pfam" id="PF00012">
    <property type="entry name" value="HSP70"/>
    <property type="match status" value="1"/>
</dbReference>
<dbReference type="PRINTS" id="PR00301">
    <property type="entry name" value="HEATSHOCK70"/>
</dbReference>
<dbReference type="SUPFAM" id="SSF53067">
    <property type="entry name" value="Actin-like ATPase domain"/>
    <property type="match status" value="2"/>
</dbReference>
<dbReference type="SUPFAM" id="SSF100934">
    <property type="entry name" value="Heat shock protein 70kD (HSP70), C-terminal subdomain"/>
    <property type="match status" value="1"/>
</dbReference>
<dbReference type="SUPFAM" id="SSF100920">
    <property type="entry name" value="Heat shock protein 70kD (HSP70), peptide-binding domain"/>
    <property type="match status" value="1"/>
</dbReference>
<dbReference type="PROSITE" id="PS00297">
    <property type="entry name" value="HSP70_1"/>
    <property type="match status" value="1"/>
</dbReference>
<dbReference type="PROSITE" id="PS00329">
    <property type="entry name" value="HSP70_2"/>
    <property type="match status" value="1"/>
</dbReference>
<dbReference type="PROSITE" id="PS01036">
    <property type="entry name" value="HSP70_3"/>
    <property type="match status" value="1"/>
</dbReference>
<sequence length="622" mass="65865">MALLQISEPGMAPAPHQRRLAVGIDLGTTNSLVAAVRNSIPEALPDDTGRVLLPSVVRYLEKGGRRIGHAAKEEAAIDPRNTIVSVKRFMGRGKAEVEGAANAPYEFVDAPGMVQIRTVDGVKSPVEVSAEILATLRQRAEDTLGDDLVGAVITVPAYFDDAQRQATKDAARLAGLNVLRLLNEPTAAAIAYGLDNGAEGLYAVYDLGGGTFDLSILKLTKGVFEVLAAGGDSALGGDDFDHLLFAHVLVQAGLDAAALAPEDVRLLLDRVRGVKEALSAAQQAQLDVKLSTGEKLVQTITRDTFAALVEPLVQRTLAPTRKALRDARVSAADIKGVVLVGGATRMPVIRDAVEKYFGQPPLVNLDPDQVVALGAAIQADLLAGNRSGGDDWLLLDVIPLSLGVETMGGLVEKIIPRNSTIPVARAQEFTTFKDGQTAMAIHVVQGERELVSDCRSLARFELRGIPPMAAGAARIRVTYQVDADGLLSVFAREQHSGVEASVVVKPSYGLGDDDIARMLEDSFKTAEVDMRARALREAQVEAQRLVEATEAALAADGDLLDASERATVEALVASLRALAPGDDANAIDAATKALAEGTDEFAARRMNKSIKRALAGRKLDEI</sequence>
<name>HSCA_BURTA</name>
<accession>Q2SXE0</accession>
<feature type="chain" id="PRO_1000044853" description="Chaperone protein HscA homolog">
    <location>
        <begin position="1"/>
        <end position="622"/>
    </location>
</feature>
<protein>
    <recommendedName>
        <fullName evidence="1">Chaperone protein HscA homolog</fullName>
    </recommendedName>
</protein>
<gene>
    <name evidence="1" type="primary">hscA</name>
    <name type="ordered locus">BTH_I1879</name>
</gene>
<reference key="1">
    <citation type="journal article" date="2005" name="BMC Genomics">
        <title>Bacterial genome adaptation to niches: divergence of the potential virulence genes in three Burkholderia species of different survival strategies.</title>
        <authorList>
            <person name="Kim H.S."/>
            <person name="Schell M.A."/>
            <person name="Yu Y."/>
            <person name="Ulrich R.L."/>
            <person name="Sarria S.H."/>
            <person name="Nierman W.C."/>
            <person name="DeShazer D."/>
        </authorList>
    </citation>
    <scope>NUCLEOTIDE SEQUENCE [LARGE SCALE GENOMIC DNA]</scope>
    <source>
        <strain>ATCC 700388 / DSM 13276 / CCUG 48851 / CIP 106301 / E264</strain>
    </source>
</reference>
<proteinExistence type="inferred from homology"/>
<comment type="function">
    <text evidence="1">Chaperone involved in the maturation of iron-sulfur cluster-containing proteins. Has a low intrinsic ATPase activity which is markedly stimulated by HscB.</text>
</comment>
<comment type="similarity">
    <text evidence="1">Belongs to the heat shock protein 70 family.</text>
</comment>
<keyword id="KW-0067">ATP-binding</keyword>
<keyword id="KW-0143">Chaperone</keyword>
<keyword id="KW-0547">Nucleotide-binding</keyword>
<organism>
    <name type="scientific">Burkholderia thailandensis (strain ATCC 700388 / DSM 13276 / CCUG 48851 / CIP 106301 / E264)</name>
    <dbReference type="NCBI Taxonomy" id="271848"/>
    <lineage>
        <taxon>Bacteria</taxon>
        <taxon>Pseudomonadati</taxon>
        <taxon>Pseudomonadota</taxon>
        <taxon>Betaproteobacteria</taxon>
        <taxon>Burkholderiales</taxon>
        <taxon>Burkholderiaceae</taxon>
        <taxon>Burkholderia</taxon>
        <taxon>pseudomallei group</taxon>
    </lineage>
</organism>
<evidence type="ECO:0000255" key="1">
    <source>
        <dbReference type="HAMAP-Rule" id="MF_00679"/>
    </source>
</evidence>